<feature type="chain" id="PRO_1000149160" description="2-isopropylmalate synthase">
    <location>
        <begin position="1"/>
        <end position="504"/>
    </location>
</feature>
<feature type="domain" description="Pyruvate carboxyltransferase" evidence="1">
    <location>
        <begin position="6"/>
        <end position="267"/>
    </location>
</feature>
<feature type="region of interest" description="Regulatory domain" evidence="1">
    <location>
        <begin position="391"/>
        <end position="504"/>
    </location>
</feature>
<feature type="binding site" evidence="1">
    <location>
        <position position="15"/>
    </location>
    <ligand>
        <name>Mn(2+)</name>
        <dbReference type="ChEBI" id="CHEBI:29035"/>
    </ligand>
</feature>
<feature type="binding site" evidence="1">
    <location>
        <position position="201"/>
    </location>
    <ligand>
        <name>Mn(2+)</name>
        <dbReference type="ChEBI" id="CHEBI:29035"/>
    </ligand>
</feature>
<feature type="binding site" evidence="1">
    <location>
        <position position="203"/>
    </location>
    <ligand>
        <name>Mn(2+)</name>
        <dbReference type="ChEBI" id="CHEBI:29035"/>
    </ligand>
</feature>
<feature type="binding site" evidence="1">
    <location>
        <position position="237"/>
    </location>
    <ligand>
        <name>Mn(2+)</name>
        <dbReference type="ChEBI" id="CHEBI:29035"/>
    </ligand>
</feature>
<reference key="1">
    <citation type="submission" date="2007-07" db="EMBL/GenBank/DDBJ databases">
        <title>Complete genome sequence of Campylobacter hominis ATCC BAA-381, a commensal isolated from the human gastrointestinal tract.</title>
        <authorList>
            <person name="Fouts D.E."/>
            <person name="Mongodin E.F."/>
            <person name="Puiu D."/>
            <person name="Sebastian Y."/>
            <person name="Miller W.G."/>
            <person name="Mandrell R.E."/>
            <person name="Nelson K.E."/>
        </authorList>
    </citation>
    <scope>NUCLEOTIDE SEQUENCE [LARGE SCALE GENOMIC DNA]</scope>
    <source>
        <strain>ATCC BAA-381 / DSM 21671 / CCUG 45161 / LMG 19568 / NCTC 13146 / CH001A</strain>
    </source>
</reference>
<protein>
    <recommendedName>
        <fullName evidence="1">2-isopropylmalate synthase</fullName>
        <ecNumber evidence="1">2.3.3.13</ecNumber>
    </recommendedName>
    <alternativeName>
        <fullName evidence="1">Alpha-IPM synthase</fullName>
    </alternativeName>
    <alternativeName>
        <fullName evidence="1">Alpha-isopropylmalate synthase</fullName>
    </alternativeName>
</protein>
<proteinExistence type="inferred from homology"/>
<sequence length="504" mass="54802">MNKNKIIVFDTTLRDGEQSPGASMNTAEKVELAIQLEKLGVDVIEAGFAAASPGDFDAIERICGAVSKIRVCSLARAIEKDIKAAGESIKSAKFKRIHTFIATSPIHMEYKLKLSPDDVIKKAINSIKYAKTFCDDVEFSCEDAGRSEISFIKEIVEAAINAGATTINLPDTVGYRLPSEMSYMIGELVKFVGDRAVISSHCHDDLGMSVANTIACIKAGARQIECTINGLGERAGNTALEEVVMAIKTRSDVFAPLYTDINFKEIYHSSRLVATITGIEPQPNKAIVGKNAFAHESGIHQDGVLKHKETYEIMRAEDIGLEKNSIVLGKHSGSHAFRDKLVSLGYNLSEDELANVFEKFKILADAKKEIFDDDLRELMTDELVKIPCAFEIIALSSSECNKGHASAALTLKHNDEILKDSALGNGVVDAIFKTIDRISGIKGNLKDYQVRAVSQGKDAQAKVTVKVLFENSSTIIGHGLDTDTLMATAKAYIGALNSYISMKQ</sequence>
<keyword id="KW-0028">Amino-acid biosynthesis</keyword>
<keyword id="KW-0100">Branched-chain amino acid biosynthesis</keyword>
<keyword id="KW-0963">Cytoplasm</keyword>
<keyword id="KW-0432">Leucine biosynthesis</keyword>
<keyword id="KW-0464">Manganese</keyword>
<keyword id="KW-0479">Metal-binding</keyword>
<keyword id="KW-1185">Reference proteome</keyword>
<keyword id="KW-0808">Transferase</keyword>
<evidence type="ECO:0000255" key="1">
    <source>
        <dbReference type="HAMAP-Rule" id="MF_01025"/>
    </source>
</evidence>
<name>LEU1_CAMHC</name>
<organism>
    <name type="scientific">Campylobacter hominis (strain ATCC BAA-381 / DSM 21671 / CCUG 45161 / LMG 19568 / NCTC 13146 / CH001A)</name>
    <dbReference type="NCBI Taxonomy" id="360107"/>
    <lineage>
        <taxon>Bacteria</taxon>
        <taxon>Pseudomonadati</taxon>
        <taxon>Campylobacterota</taxon>
        <taxon>Epsilonproteobacteria</taxon>
        <taxon>Campylobacterales</taxon>
        <taxon>Campylobacteraceae</taxon>
        <taxon>Campylobacter</taxon>
    </lineage>
</organism>
<dbReference type="EC" id="2.3.3.13" evidence="1"/>
<dbReference type="EMBL" id="CP000776">
    <property type="protein sequence ID" value="ABS52308.1"/>
    <property type="molecule type" value="Genomic_DNA"/>
</dbReference>
<dbReference type="RefSeq" id="WP_012108364.1">
    <property type="nucleotide sequence ID" value="NC_009714.1"/>
</dbReference>
<dbReference type="SMR" id="A7I0N8"/>
<dbReference type="STRING" id="360107.CHAB381_0491"/>
<dbReference type="KEGG" id="cha:CHAB381_0491"/>
<dbReference type="eggNOG" id="COG0119">
    <property type="taxonomic scope" value="Bacteria"/>
</dbReference>
<dbReference type="HOGENOM" id="CLU_022158_0_1_7"/>
<dbReference type="OrthoDB" id="9803573at2"/>
<dbReference type="UniPathway" id="UPA00048">
    <property type="reaction ID" value="UER00070"/>
</dbReference>
<dbReference type="Proteomes" id="UP000002407">
    <property type="component" value="Chromosome"/>
</dbReference>
<dbReference type="GO" id="GO:0005737">
    <property type="term" value="C:cytoplasm"/>
    <property type="evidence" value="ECO:0007669"/>
    <property type="project" value="UniProtKB-SubCell"/>
</dbReference>
<dbReference type="GO" id="GO:0003852">
    <property type="term" value="F:2-isopropylmalate synthase activity"/>
    <property type="evidence" value="ECO:0007669"/>
    <property type="project" value="UniProtKB-UniRule"/>
</dbReference>
<dbReference type="GO" id="GO:0003985">
    <property type="term" value="F:acetyl-CoA C-acetyltransferase activity"/>
    <property type="evidence" value="ECO:0007669"/>
    <property type="project" value="UniProtKB-UniRule"/>
</dbReference>
<dbReference type="GO" id="GO:0030145">
    <property type="term" value="F:manganese ion binding"/>
    <property type="evidence" value="ECO:0007669"/>
    <property type="project" value="UniProtKB-UniRule"/>
</dbReference>
<dbReference type="GO" id="GO:0009098">
    <property type="term" value="P:L-leucine biosynthetic process"/>
    <property type="evidence" value="ECO:0007669"/>
    <property type="project" value="UniProtKB-UniRule"/>
</dbReference>
<dbReference type="CDD" id="cd07940">
    <property type="entry name" value="DRE_TIM_IPMS"/>
    <property type="match status" value="1"/>
</dbReference>
<dbReference type="FunFam" id="1.10.238.260:FF:000001">
    <property type="entry name" value="2-isopropylmalate synthase"/>
    <property type="match status" value="1"/>
</dbReference>
<dbReference type="FunFam" id="3.20.20.70:FF:000010">
    <property type="entry name" value="2-isopropylmalate synthase"/>
    <property type="match status" value="1"/>
</dbReference>
<dbReference type="Gene3D" id="1.10.238.260">
    <property type="match status" value="1"/>
</dbReference>
<dbReference type="Gene3D" id="3.30.160.270">
    <property type="match status" value="1"/>
</dbReference>
<dbReference type="Gene3D" id="3.20.20.70">
    <property type="entry name" value="Aldolase class I"/>
    <property type="match status" value="1"/>
</dbReference>
<dbReference type="HAMAP" id="MF_01025">
    <property type="entry name" value="LeuA_type1"/>
    <property type="match status" value="1"/>
</dbReference>
<dbReference type="InterPro" id="IPR050073">
    <property type="entry name" value="2-IPM_HCS-like"/>
</dbReference>
<dbReference type="InterPro" id="IPR013709">
    <property type="entry name" value="2-isopropylmalate_synth_dimer"/>
</dbReference>
<dbReference type="InterPro" id="IPR002034">
    <property type="entry name" value="AIPM/Hcit_synth_CS"/>
</dbReference>
<dbReference type="InterPro" id="IPR013785">
    <property type="entry name" value="Aldolase_TIM"/>
</dbReference>
<dbReference type="InterPro" id="IPR054691">
    <property type="entry name" value="LeuA/HCS_post-cat"/>
</dbReference>
<dbReference type="InterPro" id="IPR036230">
    <property type="entry name" value="LeuA_allosteric_dom_sf"/>
</dbReference>
<dbReference type="InterPro" id="IPR005671">
    <property type="entry name" value="LeuA_bact_synth"/>
</dbReference>
<dbReference type="InterPro" id="IPR000891">
    <property type="entry name" value="PYR_CT"/>
</dbReference>
<dbReference type="NCBIfam" id="TIGR00973">
    <property type="entry name" value="leuA_bact"/>
    <property type="match status" value="1"/>
</dbReference>
<dbReference type="NCBIfam" id="NF002086">
    <property type="entry name" value="PRK00915.1-3"/>
    <property type="match status" value="1"/>
</dbReference>
<dbReference type="PANTHER" id="PTHR10277:SF9">
    <property type="entry name" value="2-ISOPROPYLMALATE SYNTHASE 1, CHLOROPLASTIC-RELATED"/>
    <property type="match status" value="1"/>
</dbReference>
<dbReference type="PANTHER" id="PTHR10277">
    <property type="entry name" value="HOMOCITRATE SYNTHASE-RELATED"/>
    <property type="match status" value="1"/>
</dbReference>
<dbReference type="Pfam" id="PF22617">
    <property type="entry name" value="HCS_D2"/>
    <property type="match status" value="1"/>
</dbReference>
<dbReference type="Pfam" id="PF00682">
    <property type="entry name" value="HMGL-like"/>
    <property type="match status" value="1"/>
</dbReference>
<dbReference type="Pfam" id="PF08502">
    <property type="entry name" value="LeuA_dimer"/>
    <property type="match status" value="1"/>
</dbReference>
<dbReference type="SMART" id="SM00917">
    <property type="entry name" value="LeuA_dimer"/>
    <property type="match status" value="1"/>
</dbReference>
<dbReference type="SUPFAM" id="SSF110921">
    <property type="entry name" value="2-isopropylmalate synthase LeuA, allosteric (dimerisation) domain"/>
    <property type="match status" value="1"/>
</dbReference>
<dbReference type="SUPFAM" id="SSF51569">
    <property type="entry name" value="Aldolase"/>
    <property type="match status" value="1"/>
</dbReference>
<dbReference type="PROSITE" id="PS00815">
    <property type="entry name" value="AIPM_HOMOCIT_SYNTH_1"/>
    <property type="match status" value="1"/>
</dbReference>
<dbReference type="PROSITE" id="PS00816">
    <property type="entry name" value="AIPM_HOMOCIT_SYNTH_2"/>
    <property type="match status" value="1"/>
</dbReference>
<dbReference type="PROSITE" id="PS50991">
    <property type="entry name" value="PYR_CT"/>
    <property type="match status" value="1"/>
</dbReference>
<gene>
    <name evidence="1" type="primary">leuA</name>
    <name type="ordered locus">CHAB381_0491</name>
</gene>
<comment type="function">
    <text evidence="1">Catalyzes the condensation of the acetyl group of acetyl-CoA with 3-methyl-2-oxobutanoate (2-ketoisovalerate) to form 3-carboxy-3-hydroxy-4-methylpentanoate (2-isopropylmalate).</text>
</comment>
<comment type="catalytic activity">
    <reaction evidence="1">
        <text>3-methyl-2-oxobutanoate + acetyl-CoA + H2O = (2S)-2-isopropylmalate + CoA + H(+)</text>
        <dbReference type="Rhea" id="RHEA:21524"/>
        <dbReference type="ChEBI" id="CHEBI:1178"/>
        <dbReference type="ChEBI" id="CHEBI:11851"/>
        <dbReference type="ChEBI" id="CHEBI:15377"/>
        <dbReference type="ChEBI" id="CHEBI:15378"/>
        <dbReference type="ChEBI" id="CHEBI:57287"/>
        <dbReference type="ChEBI" id="CHEBI:57288"/>
        <dbReference type="EC" id="2.3.3.13"/>
    </reaction>
</comment>
<comment type="cofactor">
    <cofactor evidence="1">
        <name>Mn(2+)</name>
        <dbReference type="ChEBI" id="CHEBI:29035"/>
    </cofactor>
</comment>
<comment type="pathway">
    <text evidence="1">Amino-acid biosynthesis; L-leucine biosynthesis; L-leucine from 3-methyl-2-oxobutanoate: step 1/4.</text>
</comment>
<comment type="subunit">
    <text evidence="1">Homodimer.</text>
</comment>
<comment type="subcellular location">
    <subcellularLocation>
        <location evidence="1">Cytoplasm</location>
    </subcellularLocation>
</comment>
<comment type="similarity">
    <text evidence="1">Belongs to the alpha-IPM synthase/homocitrate synthase family. LeuA type 1 subfamily.</text>
</comment>
<accession>A7I0N8</accession>